<organism>
    <name type="scientific">Arabidopsis thaliana</name>
    <name type="common">Mouse-ear cress</name>
    <dbReference type="NCBI Taxonomy" id="3702"/>
    <lineage>
        <taxon>Eukaryota</taxon>
        <taxon>Viridiplantae</taxon>
        <taxon>Streptophyta</taxon>
        <taxon>Embryophyta</taxon>
        <taxon>Tracheophyta</taxon>
        <taxon>Spermatophyta</taxon>
        <taxon>Magnoliopsida</taxon>
        <taxon>eudicotyledons</taxon>
        <taxon>Gunneridae</taxon>
        <taxon>Pentapetalae</taxon>
        <taxon>rosids</taxon>
        <taxon>malvids</taxon>
        <taxon>Brassicales</taxon>
        <taxon>Brassicaceae</taxon>
        <taxon>Camelineae</taxon>
        <taxon>Arabidopsis</taxon>
    </lineage>
</organism>
<keyword id="KW-0274">FAD</keyword>
<keyword id="KW-0276">Fatty acid metabolism</keyword>
<keyword id="KW-0285">Flavoprotein</keyword>
<keyword id="KW-0443">Lipid metabolism</keyword>
<keyword id="KW-0560">Oxidoreductase</keyword>
<keyword id="KW-0576">Peroxisome</keyword>
<keyword id="KW-1185">Reference proteome</keyword>
<keyword id="KW-0809">Transit peptide</keyword>
<evidence type="ECO:0000250" key="1"/>
<evidence type="ECO:0000305" key="2"/>
<proteinExistence type="inferred from homology"/>
<reference key="1">
    <citation type="journal article" date="2000" name="Nature">
        <title>Sequence and analysis of chromosome 1 of the plant Arabidopsis thaliana.</title>
        <authorList>
            <person name="Theologis A."/>
            <person name="Ecker J.R."/>
            <person name="Palm C.J."/>
            <person name="Federspiel N.A."/>
            <person name="Kaul S."/>
            <person name="White O."/>
            <person name="Alonso J."/>
            <person name="Altafi H."/>
            <person name="Araujo R."/>
            <person name="Bowman C.L."/>
            <person name="Brooks S.Y."/>
            <person name="Buehler E."/>
            <person name="Chan A."/>
            <person name="Chao Q."/>
            <person name="Chen H."/>
            <person name="Cheuk R.F."/>
            <person name="Chin C.W."/>
            <person name="Chung M.K."/>
            <person name="Conn L."/>
            <person name="Conway A.B."/>
            <person name="Conway A.R."/>
            <person name="Creasy T.H."/>
            <person name="Dewar K."/>
            <person name="Dunn P."/>
            <person name="Etgu P."/>
            <person name="Feldblyum T.V."/>
            <person name="Feng J.-D."/>
            <person name="Fong B."/>
            <person name="Fujii C.Y."/>
            <person name="Gill J.E."/>
            <person name="Goldsmith A.D."/>
            <person name="Haas B."/>
            <person name="Hansen N.F."/>
            <person name="Hughes B."/>
            <person name="Huizar L."/>
            <person name="Hunter J.L."/>
            <person name="Jenkins J."/>
            <person name="Johnson-Hopson C."/>
            <person name="Khan S."/>
            <person name="Khaykin E."/>
            <person name="Kim C.J."/>
            <person name="Koo H.L."/>
            <person name="Kremenetskaia I."/>
            <person name="Kurtz D.B."/>
            <person name="Kwan A."/>
            <person name="Lam B."/>
            <person name="Langin-Hooper S."/>
            <person name="Lee A."/>
            <person name="Lee J.M."/>
            <person name="Lenz C.A."/>
            <person name="Li J.H."/>
            <person name="Li Y.-P."/>
            <person name="Lin X."/>
            <person name="Liu S.X."/>
            <person name="Liu Z.A."/>
            <person name="Luros J.S."/>
            <person name="Maiti R."/>
            <person name="Marziali A."/>
            <person name="Militscher J."/>
            <person name="Miranda M."/>
            <person name="Nguyen M."/>
            <person name="Nierman W.C."/>
            <person name="Osborne B.I."/>
            <person name="Pai G."/>
            <person name="Peterson J."/>
            <person name="Pham P.K."/>
            <person name="Rizzo M."/>
            <person name="Rooney T."/>
            <person name="Rowley D."/>
            <person name="Sakano H."/>
            <person name="Salzberg S.L."/>
            <person name="Schwartz J.R."/>
            <person name="Shinn P."/>
            <person name="Southwick A.M."/>
            <person name="Sun H."/>
            <person name="Tallon L.J."/>
            <person name="Tambunga G."/>
            <person name="Toriumi M.J."/>
            <person name="Town C.D."/>
            <person name="Utterback T."/>
            <person name="Van Aken S."/>
            <person name="Vaysberg M."/>
            <person name="Vysotskaia V.S."/>
            <person name="Walker M."/>
            <person name="Wu D."/>
            <person name="Yu G."/>
            <person name="Fraser C.M."/>
            <person name="Venter J.C."/>
            <person name="Davis R.W."/>
        </authorList>
    </citation>
    <scope>NUCLEOTIDE SEQUENCE [LARGE SCALE GENOMIC DNA]</scope>
    <source>
        <strain>cv. Columbia</strain>
    </source>
</reference>
<reference key="2">
    <citation type="journal article" date="2017" name="Plant J.">
        <title>Araport11: a complete reannotation of the Arabidopsis thaliana reference genome.</title>
        <authorList>
            <person name="Cheng C.Y."/>
            <person name="Krishnakumar V."/>
            <person name="Chan A.P."/>
            <person name="Thibaud-Nissen F."/>
            <person name="Schobel S."/>
            <person name="Town C.D."/>
        </authorList>
    </citation>
    <scope>GENOME REANNOTATION</scope>
    <source>
        <strain>cv. Columbia</strain>
    </source>
</reference>
<reference key="3">
    <citation type="journal article" date="2004" name="Plant Physiol.">
        <title>Gene-specific involvement of beta-oxidation in wound-activated responses in Arabidopsis.</title>
        <authorList>
            <person name="Cruz-Castillo M."/>
            <person name="Martinez C."/>
            <person name="Buchala A."/>
            <person name="Metraux J.-P."/>
            <person name="Leon J."/>
        </authorList>
    </citation>
    <scope>IDENTIFICATION</scope>
</reference>
<dbReference type="EC" id="1.3.3.6"/>
<dbReference type="EMBL" id="AC068143">
    <property type="protein sequence ID" value="AAF82160.1"/>
    <property type="molecule type" value="Genomic_DNA"/>
</dbReference>
<dbReference type="EMBL" id="CP002684">
    <property type="protein sequence ID" value="AEE27973.1"/>
    <property type="molecule type" value="Genomic_DNA"/>
</dbReference>
<dbReference type="PIR" id="H86198">
    <property type="entry name" value="H86198"/>
</dbReference>
<dbReference type="RefSeq" id="NP_172120.2">
    <property type="nucleotide sequence ID" value="NM_100512.3"/>
</dbReference>
<dbReference type="SMR" id="Q9LMI7"/>
<dbReference type="FunCoup" id="Q9LMI7">
    <property type="interactions" value="417"/>
</dbReference>
<dbReference type="STRING" id="3702.Q9LMI7"/>
<dbReference type="iPTMnet" id="Q9LMI7"/>
<dbReference type="PaxDb" id="3702-AT1G06310.1"/>
<dbReference type="ProteomicsDB" id="244690"/>
<dbReference type="EnsemblPlants" id="AT1G06310.1">
    <property type="protein sequence ID" value="AT1G06310.1"/>
    <property type="gene ID" value="AT1G06310"/>
</dbReference>
<dbReference type="GeneID" id="837141"/>
<dbReference type="Gramene" id="AT1G06310.1">
    <property type="protein sequence ID" value="AT1G06310.1"/>
    <property type="gene ID" value="AT1G06310"/>
</dbReference>
<dbReference type="KEGG" id="ath:AT1G06310"/>
<dbReference type="Araport" id="AT1G06310"/>
<dbReference type="TAIR" id="AT1G06310">
    <property type="gene designation" value="ACX6"/>
</dbReference>
<dbReference type="eggNOG" id="KOG0135">
    <property type="taxonomic scope" value="Eukaryota"/>
</dbReference>
<dbReference type="HOGENOM" id="CLU_014629_4_0_1"/>
<dbReference type="InParanoid" id="Q9LMI7"/>
<dbReference type="OMA" id="WKLPGCF"/>
<dbReference type="PhylomeDB" id="Q9LMI7"/>
<dbReference type="BioCyc" id="ARA:AT1G06310-MONOMER"/>
<dbReference type="PRO" id="PR:Q9LMI7"/>
<dbReference type="Proteomes" id="UP000006548">
    <property type="component" value="Chromosome 1"/>
</dbReference>
<dbReference type="ExpressionAtlas" id="Q9LMI7">
    <property type="expression patterns" value="baseline and differential"/>
</dbReference>
<dbReference type="GO" id="GO:0005777">
    <property type="term" value="C:peroxisome"/>
    <property type="evidence" value="ECO:0007669"/>
    <property type="project" value="UniProtKB-SubCell"/>
</dbReference>
<dbReference type="GO" id="GO:0003997">
    <property type="term" value="F:acyl-CoA oxidase activity"/>
    <property type="evidence" value="ECO:0007669"/>
    <property type="project" value="UniProtKB-EC"/>
</dbReference>
<dbReference type="GO" id="GO:0071949">
    <property type="term" value="F:FAD binding"/>
    <property type="evidence" value="ECO:0007669"/>
    <property type="project" value="InterPro"/>
</dbReference>
<dbReference type="GO" id="GO:0006635">
    <property type="term" value="P:fatty acid beta-oxidation"/>
    <property type="evidence" value="ECO:0007669"/>
    <property type="project" value="InterPro"/>
</dbReference>
<dbReference type="FunFam" id="1.20.140.10:FF:000007">
    <property type="entry name" value="Acyl-coenzyme A oxidase"/>
    <property type="match status" value="1"/>
</dbReference>
<dbReference type="FunFam" id="1.20.140.10:FF:000010">
    <property type="entry name" value="Acyl-coenzyme A oxidase"/>
    <property type="match status" value="1"/>
</dbReference>
<dbReference type="FunFam" id="2.40.110.10:FF:000005">
    <property type="entry name" value="Acyl-coenzyme A oxidase"/>
    <property type="match status" value="1"/>
</dbReference>
<dbReference type="Gene3D" id="2.40.110.10">
    <property type="entry name" value="Butyryl-CoA Dehydrogenase, subunit A, domain 2"/>
    <property type="match status" value="1"/>
</dbReference>
<dbReference type="Gene3D" id="1.20.140.10">
    <property type="entry name" value="Butyryl-CoA Dehydrogenase, subunit A, domain 3"/>
    <property type="match status" value="2"/>
</dbReference>
<dbReference type="InterPro" id="IPR055060">
    <property type="entry name" value="ACOX_C_alpha1"/>
</dbReference>
<dbReference type="InterPro" id="IPR006091">
    <property type="entry name" value="Acyl-CoA_Oxase/DH_mid-dom"/>
</dbReference>
<dbReference type="InterPro" id="IPR046373">
    <property type="entry name" value="Acyl-CoA_Oxase/DH_mid-dom_sf"/>
</dbReference>
<dbReference type="InterPro" id="IPR012258">
    <property type="entry name" value="Acyl-CoA_oxidase"/>
</dbReference>
<dbReference type="InterPro" id="IPR002655">
    <property type="entry name" value="Acyl-CoA_oxidase_C"/>
</dbReference>
<dbReference type="InterPro" id="IPR036250">
    <property type="entry name" value="AcylCo_DH-like_C"/>
</dbReference>
<dbReference type="InterPro" id="IPR009100">
    <property type="entry name" value="AcylCoA_DH/oxidase_NM_dom_sf"/>
</dbReference>
<dbReference type="PANTHER" id="PTHR10909:SF379">
    <property type="entry name" value="ACYL-COENZYME A OXIDASE 3.2, PEROXISOMAL-RELATED"/>
    <property type="match status" value="1"/>
</dbReference>
<dbReference type="PANTHER" id="PTHR10909">
    <property type="entry name" value="ELECTRON TRANSPORT OXIDOREDUCTASE"/>
    <property type="match status" value="1"/>
</dbReference>
<dbReference type="Pfam" id="PF01756">
    <property type="entry name" value="ACOX"/>
    <property type="match status" value="1"/>
</dbReference>
<dbReference type="Pfam" id="PF22924">
    <property type="entry name" value="ACOX_C_alpha1"/>
    <property type="match status" value="1"/>
</dbReference>
<dbReference type="Pfam" id="PF02770">
    <property type="entry name" value="Acyl-CoA_dh_M"/>
    <property type="match status" value="1"/>
</dbReference>
<dbReference type="PIRSF" id="PIRSF000168">
    <property type="entry name" value="Acyl-CoA_oxidase"/>
    <property type="match status" value="1"/>
</dbReference>
<dbReference type="SUPFAM" id="SSF47203">
    <property type="entry name" value="Acyl-CoA dehydrogenase C-terminal domain-like"/>
    <property type="match status" value="2"/>
</dbReference>
<dbReference type="SUPFAM" id="SSF56645">
    <property type="entry name" value="Acyl-CoA dehydrogenase NM domain-like"/>
    <property type="match status" value="1"/>
</dbReference>
<protein>
    <recommendedName>
        <fullName>Putative acyl-coenzyme A oxidase 3.2, peroxisomal</fullName>
        <ecNumber>1.3.3.6</ecNumber>
    </recommendedName>
</protein>
<accession>Q9LMI7</accession>
<name>ACO32_ARATH</name>
<sequence length="675" mass="75900">MSENVELRRAHILANHILRSPRPSSNPSLTPEVCFQYSPPELNESYGFEVKEMRKLLDGHNLEERDWLYGLMMQSNLFNPKQRGGQIFVSPDYNQTMEQQRQISMKRIFYLLEKGVFQGWLTETGPEAELKKFALYEVCGIYDYSLSAKLGVHFLLWGNAVKFFGTKRHHEKWLKDTEDYVVKGCFAMTELGHGTNVRGIETVTTYDPTTEEFVINTPCESAQKYWIGEAANHANHAIVISQLSMNGTNQGIHVFIAQIRDHDGNTCPNVRIADCGHKIGLNGVDNGRIWFDNLRIPRENLLNSVADVLADGKYVSSIKDPDQRFGAFLAPLTSGRVTIASSAIYSAKLGLAVAIRYSLSRRAFSVAANGPEVLLLDYPSHQRRLLPLLAKTYAMSFAVNDLKMIYVKRTPETNKAIHVVSSGFKAVLTWHNMRTLQECREAVGGQGLKTENRVGHLKGEYDVQTTFEGDNNVLMQLVSKALFAEYVSCKKRNKPFKGLGLEHMNSPRPVLPTQLTSSTLRCSQFQKSVFCLRERDLLERFTSEVAELQGRGESREFLFLLNHQLSEDLSKAFTEKAILQTVLDAEAKLPPGSVKDVLGLVRSMYALISLEEDPSLLRYGHLSRDNVGDVRKEVSKLCGELRPHALALVASFGIPDAFLSPIAFNWVEANAWSSL</sequence>
<comment type="function">
    <text evidence="1">Catalyzes the desaturation of acyl-CoAs to 2-trans-enoyl-CoAs.</text>
</comment>
<comment type="catalytic activity">
    <reaction>
        <text>a 2,3-saturated acyl-CoA + O2 = a (2E)-enoyl-CoA + H2O2</text>
        <dbReference type="Rhea" id="RHEA:38959"/>
        <dbReference type="ChEBI" id="CHEBI:15379"/>
        <dbReference type="ChEBI" id="CHEBI:16240"/>
        <dbReference type="ChEBI" id="CHEBI:58856"/>
        <dbReference type="ChEBI" id="CHEBI:65111"/>
        <dbReference type="EC" id="1.3.3.6"/>
    </reaction>
</comment>
<comment type="cofactor">
    <cofactor evidence="1">
        <name>FAD</name>
        <dbReference type="ChEBI" id="CHEBI:57692"/>
    </cofactor>
</comment>
<comment type="subcellular location">
    <subcellularLocation>
        <location evidence="2">Peroxisome</location>
    </subcellularLocation>
</comment>
<comment type="similarity">
    <text evidence="2">Belongs to the acyl-CoA oxidase family.</text>
</comment>
<feature type="transit peptide" description="Peroxisome" evidence="1">
    <location>
        <begin position="1"/>
        <end position="34"/>
    </location>
</feature>
<feature type="chain" id="PRO_0000000558" description="Putative acyl-coenzyme A oxidase 3.2, peroxisomal">
    <location>
        <begin position="35"/>
        <end position="675"/>
    </location>
</feature>
<feature type="binding site" evidence="1">
    <location>
        <begin position="442"/>
        <end position="457"/>
    </location>
    <ligand>
        <name>FAD</name>
        <dbReference type="ChEBI" id="CHEBI:57692"/>
    </ligand>
</feature>
<gene>
    <name type="primary">ACX3.2</name>
    <name type="ordered locus">At1g06310</name>
    <name type="ORF">T2D23.2</name>
</gene>